<keyword id="KW-0028">Amino-acid biosynthesis</keyword>
<keyword id="KW-0057">Aromatic amino acid biosynthesis</keyword>
<keyword id="KW-0170">Cobalt</keyword>
<keyword id="KW-0963">Cytoplasm</keyword>
<keyword id="KW-0456">Lyase</keyword>
<keyword id="KW-0479">Metal-binding</keyword>
<keyword id="KW-0520">NAD</keyword>
<keyword id="KW-0547">Nucleotide-binding</keyword>
<keyword id="KW-1185">Reference proteome</keyword>
<keyword id="KW-0862">Zinc</keyword>
<evidence type="ECO:0000255" key="1">
    <source>
        <dbReference type="HAMAP-Rule" id="MF_00110"/>
    </source>
</evidence>
<accession>A1B1J4</accession>
<organism>
    <name type="scientific">Paracoccus denitrificans (strain Pd 1222)</name>
    <dbReference type="NCBI Taxonomy" id="318586"/>
    <lineage>
        <taxon>Bacteria</taxon>
        <taxon>Pseudomonadati</taxon>
        <taxon>Pseudomonadota</taxon>
        <taxon>Alphaproteobacteria</taxon>
        <taxon>Rhodobacterales</taxon>
        <taxon>Paracoccaceae</taxon>
        <taxon>Paracoccus</taxon>
    </lineage>
</organism>
<gene>
    <name evidence="1" type="primary">aroB</name>
    <name type="ordered locus">Pden_1283</name>
</gene>
<comment type="function">
    <text evidence="1">Catalyzes the conversion of 3-deoxy-D-arabino-heptulosonate 7-phosphate (DAHP) to dehydroquinate (DHQ).</text>
</comment>
<comment type="catalytic activity">
    <reaction evidence="1">
        <text>7-phospho-2-dehydro-3-deoxy-D-arabino-heptonate = 3-dehydroquinate + phosphate</text>
        <dbReference type="Rhea" id="RHEA:21968"/>
        <dbReference type="ChEBI" id="CHEBI:32364"/>
        <dbReference type="ChEBI" id="CHEBI:43474"/>
        <dbReference type="ChEBI" id="CHEBI:58394"/>
        <dbReference type="EC" id="4.2.3.4"/>
    </reaction>
</comment>
<comment type="cofactor">
    <cofactor evidence="1">
        <name>Co(2+)</name>
        <dbReference type="ChEBI" id="CHEBI:48828"/>
    </cofactor>
    <cofactor evidence="1">
        <name>Zn(2+)</name>
        <dbReference type="ChEBI" id="CHEBI:29105"/>
    </cofactor>
    <text evidence="1">Binds 1 divalent metal cation per subunit. Can use either Co(2+) or Zn(2+).</text>
</comment>
<comment type="cofactor">
    <cofactor evidence="1">
        <name>NAD(+)</name>
        <dbReference type="ChEBI" id="CHEBI:57540"/>
    </cofactor>
</comment>
<comment type="pathway">
    <text evidence="1">Metabolic intermediate biosynthesis; chorismate biosynthesis; chorismate from D-erythrose 4-phosphate and phosphoenolpyruvate: step 2/7.</text>
</comment>
<comment type="subcellular location">
    <subcellularLocation>
        <location evidence="1">Cytoplasm</location>
    </subcellularLocation>
</comment>
<comment type="similarity">
    <text evidence="1">Belongs to the sugar phosphate cyclases superfamily. Dehydroquinate synthase family.</text>
</comment>
<dbReference type="EC" id="4.2.3.4" evidence="1"/>
<dbReference type="EMBL" id="CP000489">
    <property type="protein sequence ID" value="ABL69388.1"/>
    <property type="molecule type" value="Genomic_DNA"/>
</dbReference>
<dbReference type="RefSeq" id="WP_011747606.1">
    <property type="nucleotide sequence ID" value="NC_008686.1"/>
</dbReference>
<dbReference type="SMR" id="A1B1J4"/>
<dbReference type="STRING" id="318586.Pden_1283"/>
<dbReference type="EnsemblBacteria" id="ABL69388">
    <property type="protein sequence ID" value="ABL69388"/>
    <property type="gene ID" value="Pden_1283"/>
</dbReference>
<dbReference type="GeneID" id="93452496"/>
<dbReference type="KEGG" id="pde:Pden_1283"/>
<dbReference type="eggNOG" id="COG0337">
    <property type="taxonomic scope" value="Bacteria"/>
</dbReference>
<dbReference type="HOGENOM" id="CLU_001201_0_2_5"/>
<dbReference type="OrthoDB" id="9806583at2"/>
<dbReference type="UniPathway" id="UPA00053">
    <property type="reaction ID" value="UER00085"/>
</dbReference>
<dbReference type="Proteomes" id="UP000000361">
    <property type="component" value="Chromosome 1"/>
</dbReference>
<dbReference type="GO" id="GO:0005737">
    <property type="term" value="C:cytoplasm"/>
    <property type="evidence" value="ECO:0007669"/>
    <property type="project" value="UniProtKB-SubCell"/>
</dbReference>
<dbReference type="GO" id="GO:0003856">
    <property type="term" value="F:3-dehydroquinate synthase activity"/>
    <property type="evidence" value="ECO:0007669"/>
    <property type="project" value="UniProtKB-UniRule"/>
</dbReference>
<dbReference type="GO" id="GO:0046872">
    <property type="term" value="F:metal ion binding"/>
    <property type="evidence" value="ECO:0007669"/>
    <property type="project" value="UniProtKB-KW"/>
</dbReference>
<dbReference type="GO" id="GO:0000166">
    <property type="term" value="F:nucleotide binding"/>
    <property type="evidence" value="ECO:0007669"/>
    <property type="project" value="UniProtKB-KW"/>
</dbReference>
<dbReference type="GO" id="GO:0008652">
    <property type="term" value="P:amino acid biosynthetic process"/>
    <property type="evidence" value="ECO:0007669"/>
    <property type="project" value="UniProtKB-KW"/>
</dbReference>
<dbReference type="GO" id="GO:0009073">
    <property type="term" value="P:aromatic amino acid family biosynthetic process"/>
    <property type="evidence" value="ECO:0007669"/>
    <property type="project" value="UniProtKB-KW"/>
</dbReference>
<dbReference type="GO" id="GO:0009423">
    <property type="term" value="P:chorismate biosynthetic process"/>
    <property type="evidence" value="ECO:0007669"/>
    <property type="project" value="UniProtKB-UniRule"/>
</dbReference>
<dbReference type="CDD" id="cd08195">
    <property type="entry name" value="DHQS"/>
    <property type="match status" value="1"/>
</dbReference>
<dbReference type="FunFam" id="3.40.50.1970:FF:000001">
    <property type="entry name" value="3-dehydroquinate synthase"/>
    <property type="match status" value="1"/>
</dbReference>
<dbReference type="Gene3D" id="3.40.50.1970">
    <property type="match status" value="1"/>
</dbReference>
<dbReference type="Gene3D" id="1.20.1090.10">
    <property type="entry name" value="Dehydroquinate synthase-like - alpha domain"/>
    <property type="match status" value="1"/>
</dbReference>
<dbReference type="HAMAP" id="MF_00110">
    <property type="entry name" value="DHQ_synthase"/>
    <property type="match status" value="1"/>
</dbReference>
<dbReference type="InterPro" id="IPR050071">
    <property type="entry name" value="Dehydroquinate_synthase"/>
</dbReference>
<dbReference type="InterPro" id="IPR016037">
    <property type="entry name" value="DHQ_synth_AroB"/>
</dbReference>
<dbReference type="InterPro" id="IPR030963">
    <property type="entry name" value="DHQ_synth_fam"/>
</dbReference>
<dbReference type="InterPro" id="IPR030960">
    <property type="entry name" value="DHQS/DOIS_N"/>
</dbReference>
<dbReference type="InterPro" id="IPR056179">
    <property type="entry name" value="DHQS_C"/>
</dbReference>
<dbReference type="NCBIfam" id="TIGR01357">
    <property type="entry name" value="aroB"/>
    <property type="match status" value="1"/>
</dbReference>
<dbReference type="PANTHER" id="PTHR43622">
    <property type="entry name" value="3-DEHYDROQUINATE SYNTHASE"/>
    <property type="match status" value="1"/>
</dbReference>
<dbReference type="PANTHER" id="PTHR43622:SF7">
    <property type="entry name" value="3-DEHYDROQUINATE SYNTHASE, CHLOROPLASTIC"/>
    <property type="match status" value="1"/>
</dbReference>
<dbReference type="Pfam" id="PF01761">
    <property type="entry name" value="DHQ_synthase"/>
    <property type="match status" value="1"/>
</dbReference>
<dbReference type="Pfam" id="PF24621">
    <property type="entry name" value="DHQS_C"/>
    <property type="match status" value="1"/>
</dbReference>
<dbReference type="PIRSF" id="PIRSF001455">
    <property type="entry name" value="DHQ_synth"/>
    <property type="match status" value="1"/>
</dbReference>
<dbReference type="SUPFAM" id="SSF56796">
    <property type="entry name" value="Dehydroquinate synthase-like"/>
    <property type="match status" value="1"/>
</dbReference>
<feature type="chain" id="PRO_1000117494" description="3-dehydroquinate synthase">
    <location>
        <begin position="1"/>
        <end position="367"/>
    </location>
</feature>
<feature type="binding site" evidence="1">
    <location>
        <begin position="108"/>
        <end position="112"/>
    </location>
    <ligand>
        <name>NAD(+)</name>
        <dbReference type="ChEBI" id="CHEBI:57540"/>
    </ligand>
</feature>
<feature type="binding site" evidence="1">
    <location>
        <begin position="132"/>
        <end position="133"/>
    </location>
    <ligand>
        <name>NAD(+)</name>
        <dbReference type="ChEBI" id="CHEBI:57540"/>
    </ligand>
</feature>
<feature type="binding site" evidence="1">
    <location>
        <position position="145"/>
    </location>
    <ligand>
        <name>NAD(+)</name>
        <dbReference type="ChEBI" id="CHEBI:57540"/>
    </ligand>
</feature>
<feature type="binding site" evidence="1">
    <location>
        <position position="154"/>
    </location>
    <ligand>
        <name>NAD(+)</name>
        <dbReference type="ChEBI" id="CHEBI:57540"/>
    </ligand>
</feature>
<feature type="binding site" evidence="1">
    <location>
        <position position="187"/>
    </location>
    <ligand>
        <name>Zn(2+)</name>
        <dbReference type="ChEBI" id="CHEBI:29105"/>
    </ligand>
</feature>
<feature type="binding site" evidence="1">
    <location>
        <position position="249"/>
    </location>
    <ligand>
        <name>Zn(2+)</name>
        <dbReference type="ChEBI" id="CHEBI:29105"/>
    </ligand>
</feature>
<feature type="binding site" evidence="1">
    <location>
        <position position="267"/>
    </location>
    <ligand>
        <name>Zn(2+)</name>
        <dbReference type="ChEBI" id="CHEBI:29105"/>
    </ligand>
</feature>
<sequence length="367" mass="38683">MSIDTVHVDLGARSYDVRIGQGLLARAGEEIVALAGPRRVAILTDETVAALHLPALRESLAGQGIEAPALALPAGEATKCWAELGRAVEWLLAQRIERKDLVIALGGGVIGDLAGFAAAILRRGVRFVQIPTTLLAQVDSSVGGKTGINSPQGKNLIGAFHQPALVLADIDVLTTLSPRDFRAGYGEVAKYGLLGDEGFFEWLEANAAGLASDPALRQRAVRHSVEMKAGIVQRDETEQGERALLNLGHTFGHALESATGYSDRLLHGEGVAIGCALAFELSAKMGLCSQEAPSRVAAHLAAMGMPARIADIPGDLPDDEALIGLMAQDKKVQDGRLRFVLAHGIGRAFVTDAVDPALLRQVLAQSR</sequence>
<name>AROB_PARDP</name>
<reference key="1">
    <citation type="submission" date="2006-12" db="EMBL/GenBank/DDBJ databases">
        <title>Complete sequence of chromosome 1 of Paracoccus denitrificans PD1222.</title>
        <authorList>
            <person name="Copeland A."/>
            <person name="Lucas S."/>
            <person name="Lapidus A."/>
            <person name="Barry K."/>
            <person name="Detter J.C."/>
            <person name="Glavina del Rio T."/>
            <person name="Hammon N."/>
            <person name="Israni S."/>
            <person name="Dalin E."/>
            <person name="Tice H."/>
            <person name="Pitluck S."/>
            <person name="Munk A.C."/>
            <person name="Brettin T."/>
            <person name="Bruce D."/>
            <person name="Han C."/>
            <person name="Tapia R."/>
            <person name="Gilna P."/>
            <person name="Schmutz J."/>
            <person name="Larimer F."/>
            <person name="Land M."/>
            <person name="Hauser L."/>
            <person name="Kyrpides N."/>
            <person name="Lykidis A."/>
            <person name="Spiro S."/>
            <person name="Richardson D.J."/>
            <person name="Moir J.W.B."/>
            <person name="Ferguson S.J."/>
            <person name="van Spanning R.J.M."/>
            <person name="Richardson P."/>
        </authorList>
    </citation>
    <scope>NUCLEOTIDE SEQUENCE [LARGE SCALE GENOMIC DNA]</scope>
    <source>
        <strain>Pd 1222</strain>
    </source>
</reference>
<proteinExistence type="inferred from homology"/>
<protein>
    <recommendedName>
        <fullName evidence="1">3-dehydroquinate synthase</fullName>
        <shortName evidence="1">DHQS</shortName>
        <ecNumber evidence="1">4.2.3.4</ecNumber>
    </recommendedName>
</protein>